<reference key="1">
    <citation type="journal article" date="2006" name="Proc. Natl. Acad. Sci. U.S.A.">
        <title>The partitioned Rhizobium etli genome: genetic and metabolic redundancy in seven interacting replicons.</title>
        <authorList>
            <person name="Gonzalez V."/>
            <person name="Santamaria R.I."/>
            <person name="Bustos P."/>
            <person name="Hernandez-Gonzalez I."/>
            <person name="Medrano-Soto A."/>
            <person name="Moreno-Hagelsieb G."/>
            <person name="Janga S.C."/>
            <person name="Ramirez M.A."/>
            <person name="Jimenez-Jacinto V."/>
            <person name="Collado-Vides J."/>
            <person name="Davila G."/>
        </authorList>
    </citation>
    <scope>NUCLEOTIDE SEQUENCE [LARGE SCALE GENOMIC DNA]</scope>
    <source>
        <strain>ATCC 51251 / DSM 11541 / JCM 21823 / NBRC 15573 / CFN 42</strain>
    </source>
</reference>
<proteinExistence type="inferred from homology"/>
<gene>
    <name evidence="1" type="primary">ligA</name>
    <name type="ordered locus">RHE_CH02835</name>
</gene>
<name>DNLJ_RHIEC</name>
<dbReference type="EC" id="6.5.1.2" evidence="1"/>
<dbReference type="EMBL" id="CP000133">
    <property type="protein sequence ID" value="ABC91603.1"/>
    <property type="molecule type" value="Genomic_DNA"/>
</dbReference>
<dbReference type="RefSeq" id="WP_011426080.1">
    <property type="nucleotide sequence ID" value="NC_007761.1"/>
</dbReference>
<dbReference type="SMR" id="Q2K6D3"/>
<dbReference type="KEGG" id="ret:RHE_CH02835"/>
<dbReference type="eggNOG" id="COG0272">
    <property type="taxonomic scope" value="Bacteria"/>
</dbReference>
<dbReference type="HOGENOM" id="CLU_007764_2_0_5"/>
<dbReference type="OrthoDB" id="9759736at2"/>
<dbReference type="Proteomes" id="UP000001936">
    <property type="component" value="Chromosome"/>
</dbReference>
<dbReference type="GO" id="GO:0005829">
    <property type="term" value="C:cytosol"/>
    <property type="evidence" value="ECO:0007669"/>
    <property type="project" value="TreeGrafter"/>
</dbReference>
<dbReference type="GO" id="GO:0003677">
    <property type="term" value="F:DNA binding"/>
    <property type="evidence" value="ECO:0007669"/>
    <property type="project" value="InterPro"/>
</dbReference>
<dbReference type="GO" id="GO:0003911">
    <property type="term" value="F:DNA ligase (NAD+) activity"/>
    <property type="evidence" value="ECO:0007669"/>
    <property type="project" value="UniProtKB-UniRule"/>
</dbReference>
<dbReference type="GO" id="GO:0046872">
    <property type="term" value="F:metal ion binding"/>
    <property type="evidence" value="ECO:0007669"/>
    <property type="project" value="UniProtKB-KW"/>
</dbReference>
<dbReference type="GO" id="GO:0006281">
    <property type="term" value="P:DNA repair"/>
    <property type="evidence" value="ECO:0007669"/>
    <property type="project" value="UniProtKB-KW"/>
</dbReference>
<dbReference type="GO" id="GO:0006260">
    <property type="term" value="P:DNA replication"/>
    <property type="evidence" value="ECO:0007669"/>
    <property type="project" value="UniProtKB-KW"/>
</dbReference>
<dbReference type="CDD" id="cd17748">
    <property type="entry name" value="BRCT_DNA_ligase_like"/>
    <property type="match status" value="1"/>
</dbReference>
<dbReference type="CDD" id="cd00114">
    <property type="entry name" value="LIGANc"/>
    <property type="match status" value="1"/>
</dbReference>
<dbReference type="FunFam" id="3.30.470.30:FF:000001">
    <property type="entry name" value="DNA ligase"/>
    <property type="match status" value="1"/>
</dbReference>
<dbReference type="Gene3D" id="6.20.10.30">
    <property type="match status" value="1"/>
</dbReference>
<dbReference type="Gene3D" id="1.10.150.20">
    <property type="entry name" value="5' to 3' exonuclease, C-terminal subdomain"/>
    <property type="match status" value="2"/>
</dbReference>
<dbReference type="Gene3D" id="3.40.50.10190">
    <property type="entry name" value="BRCT domain"/>
    <property type="match status" value="1"/>
</dbReference>
<dbReference type="Gene3D" id="3.30.470.30">
    <property type="entry name" value="DNA ligase/mRNA capping enzyme"/>
    <property type="match status" value="1"/>
</dbReference>
<dbReference type="Gene3D" id="1.10.287.610">
    <property type="entry name" value="Helix hairpin bin"/>
    <property type="match status" value="1"/>
</dbReference>
<dbReference type="Gene3D" id="2.40.50.140">
    <property type="entry name" value="Nucleic acid-binding proteins"/>
    <property type="match status" value="1"/>
</dbReference>
<dbReference type="HAMAP" id="MF_01588">
    <property type="entry name" value="DNA_ligase_A"/>
    <property type="match status" value="1"/>
</dbReference>
<dbReference type="InterPro" id="IPR001357">
    <property type="entry name" value="BRCT_dom"/>
</dbReference>
<dbReference type="InterPro" id="IPR036420">
    <property type="entry name" value="BRCT_dom_sf"/>
</dbReference>
<dbReference type="InterPro" id="IPR041663">
    <property type="entry name" value="DisA/LigA_HHH"/>
</dbReference>
<dbReference type="InterPro" id="IPR001679">
    <property type="entry name" value="DNA_ligase"/>
</dbReference>
<dbReference type="InterPro" id="IPR018239">
    <property type="entry name" value="DNA_ligase_AS"/>
</dbReference>
<dbReference type="InterPro" id="IPR033136">
    <property type="entry name" value="DNA_ligase_CS"/>
</dbReference>
<dbReference type="InterPro" id="IPR013839">
    <property type="entry name" value="DNAligase_adenylation"/>
</dbReference>
<dbReference type="InterPro" id="IPR013840">
    <property type="entry name" value="DNAligase_N"/>
</dbReference>
<dbReference type="InterPro" id="IPR003583">
    <property type="entry name" value="Hlx-hairpin-Hlx_DNA-bd_motif"/>
</dbReference>
<dbReference type="InterPro" id="IPR012340">
    <property type="entry name" value="NA-bd_OB-fold"/>
</dbReference>
<dbReference type="InterPro" id="IPR004150">
    <property type="entry name" value="NAD_DNA_ligase_OB"/>
</dbReference>
<dbReference type="InterPro" id="IPR010994">
    <property type="entry name" value="RuvA_2-like"/>
</dbReference>
<dbReference type="NCBIfam" id="TIGR00575">
    <property type="entry name" value="dnlj"/>
    <property type="match status" value="1"/>
</dbReference>
<dbReference type="NCBIfam" id="NF005932">
    <property type="entry name" value="PRK07956.1"/>
    <property type="match status" value="1"/>
</dbReference>
<dbReference type="PANTHER" id="PTHR23389">
    <property type="entry name" value="CHROMOSOME TRANSMISSION FIDELITY FACTOR 18"/>
    <property type="match status" value="1"/>
</dbReference>
<dbReference type="PANTHER" id="PTHR23389:SF9">
    <property type="entry name" value="DNA LIGASE"/>
    <property type="match status" value="1"/>
</dbReference>
<dbReference type="Pfam" id="PF00533">
    <property type="entry name" value="BRCT"/>
    <property type="match status" value="1"/>
</dbReference>
<dbReference type="Pfam" id="PF01653">
    <property type="entry name" value="DNA_ligase_aden"/>
    <property type="match status" value="1"/>
</dbReference>
<dbReference type="Pfam" id="PF03120">
    <property type="entry name" value="DNA_ligase_OB"/>
    <property type="match status" value="1"/>
</dbReference>
<dbReference type="Pfam" id="PF12826">
    <property type="entry name" value="HHH_2"/>
    <property type="match status" value="1"/>
</dbReference>
<dbReference type="PIRSF" id="PIRSF001604">
    <property type="entry name" value="LigA"/>
    <property type="match status" value="1"/>
</dbReference>
<dbReference type="SMART" id="SM00292">
    <property type="entry name" value="BRCT"/>
    <property type="match status" value="1"/>
</dbReference>
<dbReference type="SMART" id="SM00278">
    <property type="entry name" value="HhH1"/>
    <property type="match status" value="3"/>
</dbReference>
<dbReference type="SMART" id="SM00532">
    <property type="entry name" value="LIGANc"/>
    <property type="match status" value="1"/>
</dbReference>
<dbReference type="SUPFAM" id="SSF52113">
    <property type="entry name" value="BRCT domain"/>
    <property type="match status" value="1"/>
</dbReference>
<dbReference type="SUPFAM" id="SSF56091">
    <property type="entry name" value="DNA ligase/mRNA capping enzyme, catalytic domain"/>
    <property type="match status" value="1"/>
</dbReference>
<dbReference type="SUPFAM" id="SSF50249">
    <property type="entry name" value="Nucleic acid-binding proteins"/>
    <property type="match status" value="1"/>
</dbReference>
<dbReference type="SUPFAM" id="SSF47781">
    <property type="entry name" value="RuvA domain 2-like"/>
    <property type="match status" value="1"/>
</dbReference>
<dbReference type="PROSITE" id="PS50172">
    <property type="entry name" value="BRCT"/>
    <property type="match status" value="1"/>
</dbReference>
<dbReference type="PROSITE" id="PS01055">
    <property type="entry name" value="DNA_LIGASE_N1"/>
    <property type="match status" value="1"/>
</dbReference>
<dbReference type="PROSITE" id="PS01056">
    <property type="entry name" value="DNA_LIGASE_N2"/>
    <property type="match status" value="1"/>
</dbReference>
<sequence length="718" mass="79152">MSTEGSAVETLTIEEAAAELERLAREIAHHDALYHGKDQPEISDADYDALKRRNDALEARFPELIREDSPSRRVGAAPSVTFSPVVHARPMLSLDNTFSQEDVQDFVASVYRFLGRMPDQSIAFTAEPKIDGLSMSIRYENGRLTTAATRGDGTTGENVTANIRTIAEIPNQLPKGVPAVVEIRGEVYMAKSDFLALNRQMEAEGKQTYVNPRNTAAGSLRQLDAKVTASRKLKFFAYAWGEMSDMPADTQFAMVQTFKDWGFPVNPLMKRLNSVADILAHYDEIGLKRPDLDYDIDGVVYKVDSLELQQRLGFRSRSPRWATAHKFPAEQAFTEVEKIEIQVGRTGALTPVARLKPITVGGVVVTNATLHNEDYIKGIGNSGERIRPEEHDIREGDTVIVQRAGDVIPQILDVVMEKRLAEVKPYEFPKICPVCGSHAVREVNEKTGKMDSVRRCTGGFICRAQATEHLKHFVSRNAFDIEGLGSKQIDFFFENEDPSLQIRTAPEIFTLEKRQQDSLTKLENIDGFGKVSVGKLYAAINERRSIALHRFIYALGIRHVGETTAKLLARSYGTYEAFATAMKEAAPLSGDAWNDLNAIEGIGEVVARAMVEFYKEPRNVEVIGRLLDEVTPAEAEQPVTAGSPVAGKTVVFTGSLEKFTRDEAKARAESLGAKVAGSVSKKTDIVVAGPGAGSKLDKARELGVQTMDEDEWLALISG</sequence>
<evidence type="ECO:0000255" key="1">
    <source>
        <dbReference type="HAMAP-Rule" id="MF_01588"/>
    </source>
</evidence>
<feature type="chain" id="PRO_0000313390" description="DNA ligase">
    <location>
        <begin position="1"/>
        <end position="718"/>
    </location>
</feature>
<feature type="domain" description="BRCT" evidence="1">
    <location>
        <begin position="640"/>
        <end position="718"/>
    </location>
</feature>
<feature type="active site" description="N6-AMP-lysine intermediate" evidence="1">
    <location>
        <position position="129"/>
    </location>
</feature>
<feature type="binding site" evidence="1">
    <location>
        <begin position="44"/>
        <end position="48"/>
    </location>
    <ligand>
        <name>NAD(+)</name>
        <dbReference type="ChEBI" id="CHEBI:57540"/>
    </ligand>
</feature>
<feature type="binding site" evidence="1">
    <location>
        <begin position="93"/>
        <end position="94"/>
    </location>
    <ligand>
        <name>NAD(+)</name>
        <dbReference type="ChEBI" id="CHEBI:57540"/>
    </ligand>
</feature>
<feature type="binding site" evidence="1">
    <location>
        <position position="127"/>
    </location>
    <ligand>
        <name>NAD(+)</name>
        <dbReference type="ChEBI" id="CHEBI:57540"/>
    </ligand>
</feature>
<feature type="binding site" evidence="1">
    <location>
        <position position="150"/>
    </location>
    <ligand>
        <name>NAD(+)</name>
        <dbReference type="ChEBI" id="CHEBI:57540"/>
    </ligand>
</feature>
<feature type="binding site" evidence="1">
    <location>
        <position position="186"/>
    </location>
    <ligand>
        <name>NAD(+)</name>
        <dbReference type="ChEBI" id="CHEBI:57540"/>
    </ligand>
</feature>
<feature type="binding site" evidence="1">
    <location>
        <position position="302"/>
    </location>
    <ligand>
        <name>NAD(+)</name>
        <dbReference type="ChEBI" id="CHEBI:57540"/>
    </ligand>
</feature>
<feature type="binding site" evidence="1">
    <location>
        <position position="326"/>
    </location>
    <ligand>
        <name>NAD(+)</name>
        <dbReference type="ChEBI" id="CHEBI:57540"/>
    </ligand>
</feature>
<feature type="binding site" evidence="1">
    <location>
        <position position="432"/>
    </location>
    <ligand>
        <name>Zn(2+)</name>
        <dbReference type="ChEBI" id="CHEBI:29105"/>
    </ligand>
</feature>
<feature type="binding site" evidence="1">
    <location>
        <position position="435"/>
    </location>
    <ligand>
        <name>Zn(2+)</name>
        <dbReference type="ChEBI" id="CHEBI:29105"/>
    </ligand>
</feature>
<feature type="binding site" evidence="1">
    <location>
        <position position="456"/>
    </location>
    <ligand>
        <name>Zn(2+)</name>
        <dbReference type="ChEBI" id="CHEBI:29105"/>
    </ligand>
</feature>
<feature type="binding site" evidence="1">
    <location>
        <position position="462"/>
    </location>
    <ligand>
        <name>Zn(2+)</name>
        <dbReference type="ChEBI" id="CHEBI:29105"/>
    </ligand>
</feature>
<protein>
    <recommendedName>
        <fullName evidence="1">DNA ligase</fullName>
        <ecNumber evidence="1">6.5.1.2</ecNumber>
    </recommendedName>
    <alternativeName>
        <fullName evidence="1">Polydeoxyribonucleotide synthase [NAD(+)]</fullName>
    </alternativeName>
</protein>
<comment type="function">
    <text evidence="1">DNA ligase that catalyzes the formation of phosphodiester linkages between 5'-phosphoryl and 3'-hydroxyl groups in double-stranded DNA using NAD as a coenzyme and as the energy source for the reaction. It is essential for DNA replication and repair of damaged DNA.</text>
</comment>
<comment type="catalytic activity">
    <reaction evidence="1">
        <text>NAD(+) + (deoxyribonucleotide)n-3'-hydroxyl + 5'-phospho-(deoxyribonucleotide)m = (deoxyribonucleotide)n+m + AMP + beta-nicotinamide D-nucleotide.</text>
        <dbReference type="EC" id="6.5.1.2"/>
    </reaction>
</comment>
<comment type="cofactor">
    <cofactor evidence="1">
        <name>Mg(2+)</name>
        <dbReference type="ChEBI" id="CHEBI:18420"/>
    </cofactor>
    <cofactor evidence="1">
        <name>Mn(2+)</name>
        <dbReference type="ChEBI" id="CHEBI:29035"/>
    </cofactor>
</comment>
<comment type="similarity">
    <text evidence="1">Belongs to the NAD-dependent DNA ligase family. LigA subfamily.</text>
</comment>
<keyword id="KW-0227">DNA damage</keyword>
<keyword id="KW-0234">DNA repair</keyword>
<keyword id="KW-0235">DNA replication</keyword>
<keyword id="KW-0436">Ligase</keyword>
<keyword id="KW-0460">Magnesium</keyword>
<keyword id="KW-0464">Manganese</keyword>
<keyword id="KW-0479">Metal-binding</keyword>
<keyword id="KW-0520">NAD</keyword>
<keyword id="KW-1185">Reference proteome</keyword>
<keyword id="KW-0862">Zinc</keyword>
<organism>
    <name type="scientific">Rhizobium etli (strain ATCC 51251 / DSM 11541 / JCM 21823 / NBRC 15573 / CFN 42)</name>
    <dbReference type="NCBI Taxonomy" id="347834"/>
    <lineage>
        <taxon>Bacteria</taxon>
        <taxon>Pseudomonadati</taxon>
        <taxon>Pseudomonadota</taxon>
        <taxon>Alphaproteobacteria</taxon>
        <taxon>Hyphomicrobiales</taxon>
        <taxon>Rhizobiaceae</taxon>
        <taxon>Rhizobium/Agrobacterium group</taxon>
        <taxon>Rhizobium</taxon>
    </lineage>
</organism>
<accession>Q2K6D3</accession>